<organism>
    <name type="scientific">Homo sapiens</name>
    <name type="common">Human</name>
    <dbReference type="NCBI Taxonomy" id="9606"/>
    <lineage>
        <taxon>Eukaryota</taxon>
        <taxon>Metazoa</taxon>
        <taxon>Chordata</taxon>
        <taxon>Craniata</taxon>
        <taxon>Vertebrata</taxon>
        <taxon>Euteleostomi</taxon>
        <taxon>Mammalia</taxon>
        <taxon>Eutheria</taxon>
        <taxon>Euarchontoglires</taxon>
        <taxon>Primates</taxon>
        <taxon>Haplorrhini</taxon>
        <taxon>Catarrhini</taxon>
        <taxon>Hominidae</taxon>
        <taxon>Homo</taxon>
    </lineage>
</organism>
<reference key="1">
    <citation type="journal article" date="2004" name="Nature">
        <title>The DNA sequence and comparative analysis of human chromosome 5.</title>
        <authorList>
            <person name="Schmutz J."/>
            <person name="Martin J."/>
            <person name="Terry A."/>
            <person name="Couronne O."/>
            <person name="Grimwood J."/>
            <person name="Lowry S."/>
            <person name="Gordon L.A."/>
            <person name="Scott D."/>
            <person name="Xie G."/>
            <person name="Huang W."/>
            <person name="Hellsten U."/>
            <person name="Tran-Gyamfi M."/>
            <person name="She X."/>
            <person name="Prabhakar S."/>
            <person name="Aerts A."/>
            <person name="Altherr M."/>
            <person name="Bajorek E."/>
            <person name="Black S."/>
            <person name="Branscomb E."/>
            <person name="Caoile C."/>
            <person name="Challacombe J.F."/>
            <person name="Chan Y.M."/>
            <person name="Denys M."/>
            <person name="Detter J.C."/>
            <person name="Escobar J."/>
            <person name="Flowers D."/>
            <person name="Fotopulos D."/>
            <person name="Glavina T."/>
            <person name="Gomez M."/>
            <person name="Gonzales E."/>
            <person name="Goodstein D."/>
            <person name="Grigoriev I."/>
            <person name="Groza M."/>
            <person name="Hammon N."/>
            <person name="Hawkins T."/>
            <person name="Haydu L."/>
            <person name="Israni S."/>
            <person name="Jett J."/>
            <person name="Kadner K."/>
            <person name="Kimball H."/>
            <person name="Kobayashi A."/>
            <person name="Lopez F."/>
            <person name="Lou Y."/>
            <person name="Martinez D."/>
            <person name="Medina C."/>
            <person name="Morgan J."/>
            <person name="Nandkeshwar R."/>
            <person name="Noonan J.P."/>
            <person name="Pitluck S."/>
            <person name="Pollard M."/>
            <person name="Predki P."/>
            <person name="Priest J."/>
            <person name="Ramirez L."/>
            <person name="Retterer J."/>
            <person name="Rodriguez A."/>
            <person name="Rogers S."/>
            <person name="Salamov A."/>
            <person name="Salazar A."/>
            <person name="Thayer N."/>
            <person name="Tice H."/>
            <person name="Tsai M."/>
            <person name="Ustaszewska A."/>
            <person name="Vo N."/>
            <person name="Wheeler J."/>
            <person name="Wu K."/>
            <person name="Yang J."/>
            <person name="Dickson M."/>
            <person name="Cheng J.-F."/>
            <person name="Eichler E.E."/>
            <person name="Olsen A."/>
            <person name="Pennacchio L.A."/>
            <person name="Rokhsar D.S."/>
            <person name="Richardson P."/>
            <person name="Lucas S.M."/>
            <person name="Myers R.M."/>
            <person name="Rubin E.M."/>
        </authorList>
    </citation>
    <scope>NUCLEOTIDE SEQUENCE [LARGE SCALE GENOMIC DNA]</scope>
</reference>
<reference key="2">
    <citation type="journal article" date="2004" name="Genome Res.">
        <title>The status, quality, and expansion of the NIH full-length cDNA project: the Mammalian Gene Collection (MGC).</title>
        <authorList>
            <consortium name="The MGC Project Team"/>
        </authorList>
    </citation>
    <scope>NUCLEOTIDE SEQUENCE [LARGE SCALE MRNA]</scope>
    <source>
        <tissue>Skin</tissue>
    </source>
</reference>
<reference key="3">
    <citation type="journal article" date="2008" name="Mol. Cell">
        <title>Kinase-selective enrichment enables quantitative phosphoproteomics of the kinome across the cell cycle.</title>
        <authorList>
            <person name="Daub H."/>
            <person name="Olsen J.V."/>
            <person name="Bairlein M."/>
            <person name="Gnad F."/>
            <person name="Oppermann F.S."/>
            <person name="Korner R."/>
            <person name="Greff Z."/>
            <person name="Keri G."/>
            <person name="Stemmann O."/>
            <person name="Mann M."/>
        </authorList>
    </citation>
    <scope>IDENTIFICATION BY MASS SPECTROMETRY [LARGE SCALE ANALYSIS]</scope>
    <source>
        <tissue>Cervix carcinoma</tissue>
    </source>
</reference>
<reference key="4">
    <citation type="journal article" date="2014" name="J. Intern. Med.">
        <title>Zinc-finger BED domain-containing 3 (Zbed3) is a novel secreted protein associated with insulin resistance in humans.</title>
        <authorList>
            <person name="Jia Y."/>
            <person name="Yuan L."/>
            <person name="Hu W."/>
            <person name="Luo Y."/>
            <person name="Suo L."/>
            <person name="Yang M."/>
            <person name="Chen S."/>
            <person name="Wang Y."/>
            <person name="Liu H."/>
            <person name="Yang G."/>
            <person name="Li L."/>
        </authorList>
    </citation>
    <scope>SUBCELLULAR LOCATION</scope>
    <scope>TISSUE SPECIFICITY</scope>
    <scope>INDUCTION BY HYPERGLYCEMIA AND HYPERINSULINEMIA</scope>
</reference>
<evidence type="ECO:0000250" key="1">
    <source>
        <dbReference type="UniProtKB" id="Q9D0L1"/>
    </source>
</evidence>
<evidence type="ECO:0000255" key="2">
    <source>
        <dbReference type="PROSITE-ProRule" id="PRU00027"/>
    </source>
</evidence>
<evidence type="ECO:0000256" key="3">
    <source>
        <dbReference type="SAM" id="MobiDB-lite"/>
    </source>
</evidence>
<evidence type="ECO:0000269" key="4">
    <source>
    </source>
</evidence>
<feature type="chain" id="PRO_0000066562" description="Zinc finger BED domain-containing protein 3">
    <location>
        <begin position="1"/>
        <end position="234"/>
    </location>
</feature>
<feature type="zinc finger region" description="BED-type" evidence="2">
    <location>
        <begin position="43"/>
        <end position="104"/>
    </location>
</feature>
<feature type="region of interest" description="Disordered" evidence="3">
    <location>
        <begin position="19"/>
        <end position="42"/>
    </location>
</feature>
<feature type="region of interest" description="Disordered" evidence="3">
    <location>
        <begin position="94"/>
        <end position="126"/>
    </location>
</feature>
<feature type="region of interest" description="Disordered" evidence="3">
    <location>
        <begin position="202"/>
        <end position="225"/>
    </location>
</feature>
<feature type="compositionally biased region" description="Pro residues" evidence="3">
    <location>
        <begin position="111"/>
        <end position="122"/>
    </location>
</feature>
<feature type="compositionally biased region" description="Basic and acidic residues" evidence="3">
    <location>
        <begin position="216"/>
        <end position="225"/>
    </location>
</feature>
<feature type="binding site" evidence="2">
    <location>
        <position position="69"/>
    </location>
    <ligand>
        <name>Zn(2+)</name>
        <dbReference type="ChEBI" id="CHEBI:29105"/>
    </ligand>
</feature>
<feature type="binding site" evidence="2">
    <location>
        <position position="72"/>
    </location>
    <ligand>
        <name>Zn(2+)</name>
        <dbReference type="ChEBI" id="CHEBI:29105"/>
    </ligand>
</feature>
<feature type="binding site" evidence="2">
    <location>
        <position position="92"/>
    </location>
    <ligand>
        <name>Zn(2+)</name>
        <dbReference type="ChEBI" id="CHEBI:29105"/>
    </ligand>
</feature>
<feature type="binding site" evidence="2">
    <location>
        <position position="97"/>
    </location>
    <ligand>
        <name>Zn(2+)</name>
        <dbReference type="ChEBI" id="CHEBI:29105"/>
    </ligand>
</feature>
<comment type="function">
    <text evidence="1">Acts as a positive regulator in the activation of the canonical Wnt/beta-catenin signaling pathway by stabilizing cytoplasmic beta-catenin (By similarity). Involved in transcription activation of Wnt target gene expression (By similarity). Plays a role in symmetric division of blastomeres in the early stages of embryogenesis via regulation of mitotic spindle central positioning and organization of the F-actin filament network (By similarity). Plays a role in regulating the distribution of cellular organelles, via modulation of cytoskeletal dynamics and cytoplasmic lattice formation (By similarity).</text>
</comment>
<comment type="subunit">
    <text evidence="1">Associates with the subcortical maternal complex (SCMC) composed of at least NLRP5, KHDC3L, OOEP, and TLE6 via interaction with NLRP5 and TLE6 (By similarity). Interacts with AXIN1; the interaction is direct, enhanced by protein kinase GSK3B and casein kinase CSNK1E activities and decreases GSK3B-induced beta-catenin serine and threonine phosphorylations (By similarity).</text>
</comment>
<comment type="subcellular location">
    <subcellularLocation>
        <location evidence="1">Cytoplasm</location>
    </subcellularLocation>
    <subcellularLocation>
        <location evidence="1">Membrane</location>
    </subcellularLocation>
    <subcellularLocation>
        <location evidence="4">Secreted</location>
    </subcellularLocation>
</comment>
<comment type="tissue specificity">
    <text evidence="4">Secreted in blood plasma, and expressed in skeletal muscle and adipose tissue (at protein level).</text>
</comment>
<comment type="induction">
    <text evidence="4">Induced in blood plasma by hyperglycemia (PubMed:24283382). Decreased in blood plasma by hyperinsulinemia (PubMed:24283382).</text>
</comment>
<sequence>MRSGEPACTMDQARGLDDAAARGGQCPGLGPAPTPTPPGRLGAPYSEAWGYFHLAPGRPGHPSGHWATCRLCGEQVGRGPGFHAGTSALWRHLRSAHRRELESSGAGSSPPAAPCPPPPGPAAAPEGDWARLLEQMGALAVRGSRRERELERRELAVEQGERALERRRRALQEEERAAAQARRELQAEREALQARLRDVSRREGALGWAPAAPPPLKDDPEGDRDGCVITKVLL</sequence>
<gene>
    <name type="primary">ZBED3</name>
</gene>
<keyword id="KW-0963">Cytoplasm</keyword>
<keyword id="KW-0472">Membrane</keyword>
<keyword id="KW-0479">Metal-binding</keyword>
<keyword id="KW-1267">Proteomics identification</keyword>
<keyword id="KW-1185">Reference proteome</keyword>
<keyword id="KW-0964">Secreted</keyword>
<keyword id="KW-0879">Wnt signaling pathway</keyword>
<keyword id="KW-0862">Zinc</keyword>
<keyword id="KW-0863">Zinc-finger</keyword>
<dbReference type="EMBL" id="AC008581">
    <property type="status" value="NOT_ANNOTATED_CDS"/>
    <property type="molecule type" value="Genomic_DNA"/>
</dbReference>
<dbReference type="EMBL" id="BC007239">
    <property type="protein sequence ID" value="AAH07239.1"/>
    <property type="molecule type" value="mRNA"/>
</dbReference>
<dbReference type="CCDS" id="CCDS4036.1"/>
<dbReference type="RefSeq" id="NP_001316493.1">
    <property type="nucleotide sequence ID" value="NM_001329564.2"/>
</dbReference>
<dbReference type="RefSeq" id="NP_115743.1">
    <property type="nucleotide sequence ID" value="NM_032367.4"/>
</dbReference>
<dbReference type="SMR" id="Q96IU2"/>
<dbReference type="BioGRID" id="124051">
    <property type="interactions" value="11"/>
</dbReference>
<dbReference type="FunCoup" id="Q96IU2">
    <property type="interactions" value="16"/>
</dbReference>
<dbReference type="IntAct" id="Q96IU2">
    <property type="interactions" value="3"/>
</dbReference>
<dbReference type="STRING" id="9606.ENSP00000255198"/>
<dbReference type="GlyGen" id="Q96IU2">
    <property type="glycosylation" value="2 sites"/>
</dbReference>
<dbReference type="iPTMnet" id="Q96IU2"/>
<dbReference type="PhosphoSitePlus" id="Q96IU2"/>
<dbReference type="BioMuta" id="ZBED3"/>
<dbReference type="DMDM" id="34925646"/>
<dbReference type="jPOST" id="Q96IU2"/>
<dbReference type="MassIVE" id="Q96IU2"/>
<dbReference type="PaxDb" id="9606-ENSP00000255198"/>
<dbReference type="PeptideAtlas" id="Q96IU2"/>
<dbReference type="ProteomicsDB" id="76853"/>
<dbReference type="Pumba" id="Q96IU2"/>
<dbReference type="Antibodypedia" id="24479">
    <property type="antibodies" value="80 antibodies from 23 providers"/>
</dbReference>
<dbReference type="DNASU" id="84327"/>
<dbReference type="Ensembl" id="ENST00000255198.3">
    <property type="protein sequence ID" value="ENSP00000255198.2"/>
    <property type="gene ID" value="ENSG00000132846.6"/>
</dbReference>
<dbReference type="GeneID" id="84327"/>
<dbReference type="KEGG" id="hsa:84327"/>
<dbReference type="MANE-Select" id="ENST00000255198.3">
    <property type="protein sequence ID" value="ENSP00000255198.2"/>
    <property type="RefSeq nucleotide sequence ID" value="NM_032367.4"/>
    <property type="RefSeq protein sequence ID" value="NP_115743.1"/>
</dbReference>
<dbReference type="UCSC" id="uc003kev.2">
    <property type="organism name" value="human"/>
</dbReference>
<dbReference type="AGR" id="HGNC:20711"/>
<dbReference type="CTD" id="84327"/>
<dbReference type="DisGeNET" id="84327"/>
<dbReference type="GeneCards" id="ZBED3"/>
<dbReference type="HGNC" id="HGNC:20711">
    <property type="gene designation" value="ZBED3"/>
</dbReference>
<dbReference type="HPA" id="ENSG00000132846">
    <property type="expression patterns" value="Low tissue specificity"/>
</dbReference>
<dbReference type="MIM" id="615250">
    <property type="type" value="gene"/>
</dbReference>
<dbReference type="neXtProt" id="NX_Q96IU2"/>
<dbReference type="OpenTargets" id="ENSG00000132846"/>
<dbReference type="PharmGKB" id="PA134974972"/>
<dbReference type="VEuPathDB" id="HostDB:ENSG00000132846"/>
<dbReference type="eggNOG" id="ENOG502SQ4N">
    <property type="taxonomic scope" value="Eukaryota"/>
</dbReference>
<dbReference type="GeneTree" id="ENSGT00940000164103"/>
<dbReference type="HOGENOM" id="CLU_112726_0_0_1"/>
<dbReference type="InParanoid" id="Q96IU2"/>
<dbReference type="OMA" id="RDSCVIT"/>
<dbReference type="OrthoDB" id="9837993at2759"/>
<dbReference type="PAN-GO" id="Q96IU2">
    <property type="GO annotations" value="2 GO annotations based on evolutionary models"/>
</dbReference>
<dbReference type="PhylomeDB" id="Q96IU2"/>
<dbReference type="TreeFam" id="TF338048"/>
<dbReference type="PathwayCommons" id="Q96IU2"/>
<dbReference type="SignaLink" id="Q96IU2"/>
<dbReference type="BioGRID-ORCS" id="84327">
    <property type="hits" value="15 hits in 1163 CRISPR screens"/>
</dbReference>
<dbReference type="ChiTaRS" id="ZBED3">
    <property type="organism name" value="human"/>
</dbReference>
<dbReference type="GenomeRNAi" id="84327"/>
<dbReference type="Pharos" id="Q96IU2">
    <property type="development level" value="Tbio"/>
</dbReference>
<dbReference type="PRO" id="PR:Q96IU2"/>
<dbReference type="Proteomes" id="UP000005640">
    <property type="component" value="Chromosome 5"/>
</dbReference>
<dbReference type="RNAct" id="Q96IU2">
    <property type="molecule type" value="protein"/>
</dbReference>
<dbReference type="Bgee" id="ENSG00000132846">
    <property type="expression patterns" value="Expressed in kidney epithelium and 159 other cell types or tissues"/>
</dbReference>
<dbReference type="ExpressionAtlas" id="Q96IU2">
    <property type="expression patterns" value="baseline and differential"/>
</dbReference>
<dbReference type="GO" id="GO:0000785">
    <property type="term" value="C:chromatin"/>
    <property type="evidence" value="ECO:0000247"/>
    <property type="project" value="NTNU_SB"/>
</dbReference>
<dbReference type="GO" id="GO:0005737">
    <property type="term" value="C:cytoplasm"/>
    <property type="evidence" value="ECO:0000250"/>
    <property type="project" value="UniProtKB"/>
</dbReference>
<dbReference type="GO" id="GO:0005829">
    <property type="term" value="C:cytosol"/>
    <property type="evidence" value="ECO:0000250"/>
    <property type="project" value="UniProtKB"/>
</dbReference>
<dbReference type="GO" id="GO:0005615">
    <property type="term" value="C:extracellular space"/>
    <property type="evidence" value="ECO:0000314"/>
    <property type="project" value="UniProtKB"/>
</dbReference>
<dbReference type="GO" id="GO:0016020">
    <property type="term" value="C:membrane"/>
    <property type="evidence" value="ECO:0000250"/>
    <property type="project" value="UniProtKB"/>
</dbReference>
<dbReference type="GO" id="GO:0003677">
    <property type="term" value="F:DNA binding"/>
    <property type="evidence" value="ECO:0007669"/>
    <property type="project" value="InterPro"/>
</dbReference>
<dbReference type="GO" id="GO:0000981">
    <property type="term" value="F:DNA-binding transcription factor activity, RNA polymerase II-specific"/>
    <property type="evidence" value="ECO:0000247"/>
    <property type="project" value="NTNU_SB"/>
</dbReference>
<dbReference type="GO" id="GO:0008270">
    <property type="term" value="F:zinc ion binding"/>
    <property type="evidence" value="ECO:0007669"/>
    <property type="project" value="UniProtKB-KW"/>
</dbReference>
<dbReference type="GO" id="GO:0007015">
    <property type="term" value="P:actin filament organization"/>
    <property type="evidence" value="ECO:0000250"/>
    <property type="project" value="UniProtKB"/>
</dbReference>
<dbReference type="GO" id="GO:0051643">
    <property type="term" value="P:endoplasmic reticulum localization"/>
    <property type="evidence" value="ECO:0000250"/>
    <property type="project" value="UniProtKB"/>
</dbReference>
<dbReference type="GO" id="GO:0051293">
    <property type="term" value="P:establishment of spindle localization"/>
    <property type="evidence" value="ECO:0000250"/>
    <property type="project" value="UniProtKB"/>
</dbReference>
<dbReference type="GO" id="GO:0051646">
    <property type="term" value="P:mitochondrion localization"/>
    <property type="evidence" value="ECO:0000250"/>
    <property type="project" value="UniProtKB"/>
</dbReference>
<dbReference type="GO" id="GO:0001933">
    <property type="term" value="P:negative regulation of protein phosphorylation"/>
    <property type="evidence" value="ECO:0000250"/>
    <property type="project" value="UniProtKB"/>
</dbReference>
<dbReference type="GO" id="GO:0090263">
    <property type="term" value="P:positive regulation of canonical Wnt signaling pathway"/>
    <property type="evidence" value="ECO:0000250"/>
    <property type="project" value="UniProtKB"/>
</dbReference>
<dbReference type="GO" id="GO:0040019">
    <property type="term" value="P:positive regulation of embryonic development"/>
    <property type="evidence" value="ECO:0000250"/>
    <property type="project" value="UniProtKB"/>
</dbReference>
<dbReference type="GO" id="GO:0045944">
    <property type="term" value="P:positive regulation of transcription by RNA polymerase II"/>
    <property type="evidence" value="ECO:0000250"/>
    <property type="project" value="UniProtKB"/>
</dbReference>
<dbReference type="GO" id="GO:0050821">
    <property type="term" value="P:protein stabilization"/>
    <property type="evidence" value="ECO:0000250"/>
    <property type="project" value="UniProtKB"/>
</dbReference>
<dbReference type="GO" id="GO:0006357">
    <property type="term" value="P:regulation of transcription by RNA polymerase II"/>
    <property type="evidence" value="ECO:0000318"/>
    <property type="project" value="GO_Central"/>
</dbReference>
<dbReference type="GO" id="GO:0009749">
    <property type="term" value="P:response to glucose"/>
    <property type="evidence" value="ECO:0000314"/>
    <property type="project" value="UniProtKB"/>
</dbReference>
<dbReference type="GO" id="GO:0032868">
    <property type="term" value="P:response to insulin"/>
    <property type="evidence" value="ECO:0000314"/>
    <property type="project" value="UniProtKB"/>
</dbReference>
<dbReference type="GO" id="GO:0016055">
    <property type="term" value="P:Wnt signaling pathway"/>
    <property type="evidence" value="ECO:0007669"/>
    <property type="project" value="UniProtKB-KW"/>
</dbReference>
<dbReference type="InterPro" id="IPR043471">
    <property type="entry name" value="ZBED2/3"/>
</dbReference>
<dbReference type="InterPro" id="IPR003656">
    <property type="entry name" value="Znf_BED"/>
</dbReference>
<dbReference type="InterPro" id="IPR036236">
    <property type="entry name" value="Znf_C2H2_sf"/>
</dbReference>
<dbReference type="PANTHER" id="PTHR35827">
    <property type="entry name" value="ZINC FINGER BED DOMAIN-CONTAINING PROTEIN 3"/>
    <property type="match status" value="1"/>
</dbReference>
<dbReference type="PANTHER" id="PTHR35827:SF2">
    <property type="entry name" value="ZINC FINGER BED DOMAIN-CONTAINING PROTEIN 3"/>
    <property type="match status" value="1"/>
</dbReference>
<dbReference type="Pfam" id="PF02892">
    <property type="entry name" value="zf-BED"/>
    <property type="match status" value="1"/>
</dbReference>
<dbReference type="SMART" id="SM00614">
    <property type="entry name" value="ZnF_BED"/>
    <property type="match status" value="1"/>
</dbReference>
<dbReference type="SUPFAM" id="SSF57667">
    <property type="entry name" value="beta-beta-alpha zinc fingers"/>
    <property type="match status" value="1"/>
</dbReference>
<dbReference type="PROSITE" id="PS50808">
    <property type="entry name" value="ZF_BED"/>
    <property type="match status" value="1"/>
</dbReference>
<proteinExistence type="evidence at protein level"/>
<protein>
    <recommendedName>
        <fullName>Zinc finger BED domain-containing protein 3</fullName>
    </recommendedName>
    <alternativeName>
        <fullName>Axin-interacting protein</fullName>
    </alternativeName>
</protein>
<accession>Q96IU2</accession>
<name>ZBED3_HUMAN</name>